<feature type="initiator methionine" description="Removed" evidence="2">
    <location>
        <position position="1"/>
    </location>
</feature>
<feature type="chain" id="PRO_0000318945" description="GA-binding protein subunit beta-1">
    <location>
        <begin position="2"/>
        <end position="383"/>
    </location>
</feature>
<feature type="repeat" description="ANK 1">
    <location>
        <begin position="5"/>
        <end position="34"/>
    </location>
</feature>
<feature type="repeat" description="ANK 2">
    <location>
        <begin position="37"/>
        <end position="66"/>
    </location>
</feature>
<feature type="repeat" description="ANK 3">
    <location>
        <begin position="70"/>
        <end position="99"/>
    </location>
</feature>
<feature type="repeat" description="ANK 4">
    <location>
        <begin position="103"/>
        <end position="132"/>
    </location>
</feature>
<feature type="repeat" description="ANK 5">
    <location>
        <begin position="136"/>
        <end position="166"/>
    </location>
</feature>
<feature type="modified residue" description="N-acetylserine" evidence="2">
    <location>
        <position position="2"/>
    </location>
</feature>
<feature type="modified residue" description="N6-acetyllysine" evidence="1">
    <location>
        <position position="69"/>
    </location>
</feature>
<feature type="modified residue" description="N6-acetyllysine" evidence="1">
    <location>
        <position position="340"/>
    </location>
</feature>
<feature type="modified residue" description="N6-acetyllysine" evidence="1">
    <location>
        <position position="369"/>
    </location>
</feature>
<protein>
    <recommendedName>
        <fullName>GA-binding protein subunit beta-1</fullName>
        <shortName>GABP subunit beta-1</shortName>
        <shortName>GABPB-1</shortName>
    </recommendedName>
    <alternativeName>
        <fullName>GABP subunit beta-2</fullName>
        <shortName>GABPB-2</shortName>
    </alternativeName>
</protein>
<reference key="1">
    <citation type="submission" date="2006-04" db="EMBL/GenBank/DDBJ databases">
        <authorList>
            <consortium name="NIH - Mammalian Gene Collection (MGC) project"/>
        </authorList>
    </citation>
    <scope>NUCLEOTIDE SEQUENCE [LARGE SCALE MRNA]</scope>
    <source>
        <strain>Hereford</strain>
        <tissue>Thymus</tissue>
    </source>
</reference>
<evidence type="ECO:0000250" key="1">
    <source>
        <dbReference type="UniProtKB" id="Q00420"/>
    </source>
</evidence>
<evidence type="ECO:0000250" key="2">
    <source>
        <dbReference type="UniProtKB" id="Q06547"/>
    </source>
</evidence>
<dbReference type="EMBL" id="BC114881">
    <property type="protein sequence ID" value="AAI14882.1"/>
    <property type="molecule type" value="mRNA"/>
</dbReference>
<dbReference type="RefSeq" id="NP_001069272.1">
    <property type="nucleotide sequence ID" value="NM_001075804.2"/>
</dbReference>
<dbReference type="RefSeq" id="XP_003586626.3">
    <property type="nucleotide sequence ID" value="XM_003586578.3"/>
</dbReference>
<dbReference type="RefSeq" id="XP_015320604.1">
    <property type="nucleotide sequence ID" value="XM_015465118.1"/>
</dbReference>
<dbReference type="SMR" id="Q1RMI3"/>
<dbReference type="FunCoup" id="Q1RMI3">
    <property type="interactions" value="4221"/>
</dbReference>
<dbReference type="STRING" id="9913.ENSBTAP00000030917"/>
<dbReference type="PaxDb" id="9913-ENSBTAP00000030917"/>
<dbReference type="GeneID" id="520313"/>
<dbReference type="KEGG" id="bta:520313"/>
<dbReference type="CTD" id="2553"/>
<dbReference type="VEuPathDB" id="HostDB:ENSBTAG00000022801"/>
<dbReference type="eggNOG" id="ENOG502QRTX">
    <property type="taxonomic scope" value="Eukaryota"/>
</dbReference>
<dbReference type="HOGENOM" id="CLU_000134_12_1_1"/>
<dbReference type="InParanoid" id="Q1RMI3"/>
<dbReference type="OrthoDB" id="341259at2759"/>
<dbReference type="Reactome" id="R-BTA-2151201">
    <property type="pathway name" value="Transcriptional activation of mitochondrial biogenesis"/>
</dbReference>
<dbReference type="Proteomes" id="UP000009136">
    <property type="component" value="Chromosome 10"/>
</dbReference>
<dbReference type="Bgee" id="ENSBTAG00000022801">
    <property type="expression patterns" value="Expressed in oocyte and 109 other cell types or tissues"/>
</dbReference>
<dbReference type="GO" id="GO:0005634">
    <property type="term" value="C:nucleus"/>
    <property type="evidence" value="ECO:0000318"/>
    <property type="project" value="GO_Central"/>
</dbReference>
<dbReference type="GO" id="GO:0000976">
    <property type="term" value="F:transcription cis-regulatory region binding"/>
    <property type="evidence" value="ECO:0000318"/>
    <property type="project" value="GO_Central"/>
</dbReference>
<dbReference type="GO" id="GO:0007005">
    <property type="term" value="P:mitochondrion organization"/>
    <property type="evidence" value="ECO:0000250"/>
    <property type="project" value="UniProtKB"/>
</dbReference>
<dbReference type="GO" id="GO:0045944">
    <property type="term" value="P:positive regulation of transcription by RNA polymerase II"/>
    <property type="evidence" value="ECO:0000318"/>
    <property type="project" value="GO_Central"/>
</dbReference>
<dbReference type="FunFam" id="1.25.40.20:FF:000025">
    <property type="entry name" value="GA-binding protein subunit beta-1 isoform X1"/>
    <property type="match status" value="1"/>
</dbReference>
<dbReference type="Gene3D" id="1.25.40.20">
    <property type="entry name" value="Ankyrin repeat-containing domain"/>
    <property type="match status" value="1"/>
</dbReference>
<dbReference type="InterPro" id="IPR050663">
    <property type="entry name" value="Ankyrin-SOCS_Box"/>
</dbReference>
<dbReference type="InterPro" id="IPR002110">
    <property type="entry name" value="Ankyrin_rpt"/>
</dbReference>
<dbReference type="InterPro" id="IPR036770">
    <property type="entry name" value="Ankyrin_rpt-contain_sf"/>
</dbReference>
<dbReference type="PANTHER" id="PTHR24193">
    <property type="entry name" value="ANKYRIN REPEAT PROTEIN"/>
    <property type="match status" value="1"/>
</dbReference>
<dbReference type="PANTHER" id="PTHR24193:SF76">
    <property type="entry name" value="GA-BINDING PROTEIN SUBUNIT BETA-1"/>
    <property type="match status" value="1"/>
</dbReference>
<dbReference type="Pfam" id="PF00023">
    <property type="entry name" value="Ank"/>
    <property type="match status" value="1"/>
</dbReference>
<dbReference type="Pfam" id="PF12796">
    <property type="entry name" value="Ank_2"/>
    <property type="match status" value="1"/>
</dbReference>
<dbReference type="PRINTS" id="PR01415">
    <property type="entry name" value="ANKYRIN"/>
</dbReference>
<dbReference type="SMART" id="SM00248">
    <property type="entry name" value="ANK"/>
    <property type="match status" value="4"/>
</dbReference>
<dbReference type="SUPFAM" id="SSF48403">
    <property type="entry name" value="Ankyrin repeat"/>
    <property type="match status" value="1"/>
</dbReference>
<dbReference type="PROSITE" id="PS50297">
    <property type="entry name" value="ANK_REP_REGION"/>
    <property type="match status" value="1"/>
</dbReference>
<dbReference type="PROSITE" id="PS50088">
    <property type="entry name" value="ANK_REPEAT"/>
    <property type="match status" value="3"/>
</dbReference>
<organism>
    <name type="scientific">Bos taurus</name>
    <name type="common">Bovine</name>
    <dbReference type="NCBI Taxonomy" id="9913"/>
    <lineage>
        <taxon>Eukaryota</taxon>
        <taxon>Metazoa</taxon>
        <taxon>Chordata</taxon>
        <taxon>Craniata</taxon>
        <taxon>Vertebrata</taxon>
        <taxon>Euteleostomi</taxon>
        <taxon>Mammalia</taxon>
        <taxon>Eutheria</taxon>
        <taxon>Laurasiatheria</taxon>
        <taxon>Artiodactyla</taxon>
        <taxon>Ruminantia</taxon>
        <taxon>Pecora</taxon>
        <taxon>Bovidae</taxon>
        <taxon>Bovinae</taxon>
        <taxon>Bos</taxon>
    </lineage>
</organism>
<proteinExistence type="evidence at transcript level"/>
<gene>
    <name type="primary">GABPB1</name>
    <name type="synonym">GABPB2</name>
</gene>
<sequence length="383" mass="41321">MSLVDLGKKLLEAARAGQDDEVRILMANGAPFTTDWLGTSPLHLAAQYGHYSTTEVLLRAGVSRDARTKVDRTPLHMAASEGHASIVEVLLKHGADVNAKDMLKMTALHWATEHNHQEVVELLIKYGADVHTQSKFCKTAFDISIDNGNEDLAEILQIAMQNQINTNPESPDTVTIHAATPQFIIGPGGVVNLTDETGVSAVQFGNSSTSVLATLAALAEASAPLSNSSETPVVATEEVVTAESVDGAIQQVVSSGGQQVITIVTDGIQLGNLHSIPTSGIGQPIIVTMPDGQQVLTVPATDIAEETVISEEPPAKRQCIEIIENRVESAEIEEREALQKQLDEANREAQKYRQQLLKKEQEAEAYRQKLEAMTRLQTNKEAV</sequence>
<accession>Q1RMI3</accession>
<comment type="function">
    <text evidence="1">Transcription factor capable of interacting with purine rich repeats (GA repeats). Acts as a master regulator of nuclear-encoded mitochondrial genes.</text>
</comment>
<comment type="subunit">
    <text evidence="2">Heterotetramer of two alpha and two beta subunits. Interacts with HCFC1, causing repression of transcriptional activity.</text>
</comment>
<comment type="subcellular location">
    <subcellularLocation>
        <location evidence="2">Nucleus</location>
    </subcellularLocation>
</comment>
<comment type="PTM">
    <text evidence="1">Acetylated by EP300/p300. Deacetylated by SIRT7, promoting heterotetramerization and activity.</text>
</comment>
<keyword id="KW-0007">Acetylation</keyword>
<keyword id="KW-0040">ANK repeat</keyword>
<keyword id="KW-0539">Nucleus</keyword>
<keyword id="KW-1185">Reference proteome</keyword>
<keyword id="KW-0677">Repeat</keyword>
<keyword id="KW-0804">Transcription</keyword>
<keyword id="KW-0805">Transcription regulation</keyword>
<name>GABP1_BOVIN</name>